<accession>C3K3F7</accession>
<feature type="chain" id="PRO_0000381950" description="DNA ligase B">
    <location>
        <begin position="1"/>
        <end position="554"/>
    </location>
</feature>
<feature type="active site" description="N6-AMP-lysine intermediate" evidence="1">
    <location>
        <position position="122"/>
    </location>
</feature>
<sequence>MMHLLFALLLSALPCWVWAQACSDEARAHVSTLAEQIRQWDDSYHRLGQSPVSDELYDQARQRLAQWHQCFPAPTATPNTPLASSRGAQPHPVAHTGLEKLLDEHAVDAWLGTRKDVWIQPKVDGVAVTLVYQQGRLRQVISRGDGVMGHDWSASARKIPGIVQQLPDPIDLVLQGELYWRLDDHVQSASGGLNARSKVAGLMNRKHLGDTDAAGIGLFVWAWPQGPAAFTERLSTLKRWGFTDTQRFSQPIRNISEAAHWRAYWYGHPLPFASDGVVLHQAQHAPAERWQVSTPYWAAAWKYPTTKALALVRDVQFKIGRTGRITPMLELEPVRLDDRQISRVSAGSLKRWQSLDIRPGDHVSISLAGQVIPRLDEVILRSSTRADLPVPNPGKFHALSCWQLDPGCEEQLLARLSWLSGNQGLALPHIGRETWSVLIQAGLIAGFLDWLTLDTAELANIDGFGDRTRARVVDSFHSARQRPFAQWLKALGVPPAARNNLEGDWQTLVARDTQAWLAIDGIGPGRAAQLSAFFRDPHVQALAETLRVAGIDGF</sequence>
<protein>
    <recommendedName>
        <fullName evidence="1">DNA ligase B</fullName>
        <ecNumber evidence="1">6.5.1.2</ecNumber>
    </recommendedName>
    <alternativeName>
        <fullName evidence="1">Polydeoxyribonucleotide synthase [NAD(+)] B</fullName>
    </alternativeName>
</protein>
<dbReference type="EC" id="6.5.1.2" evidence="1"/>
<dbReference type="EMBL" id="AM181176">
    <property type="protein sequence ID" value="CAY53062.1"/>
    <property type="molecule type" value="Genomic_DNA"/>
</dbReference>
<dbReference type="RefSeq" id="WP_015886299.1">
    <property type="nucleotide sequence ID" value="NC_012660.1"/>
</dbReference>
<dbReference type="SMR" id="C3K3F7"/>
<dbReference type="PATRIC" id="fig|216595.4.peg.5834"/>
<dbReference type="eggNOG" id="COG0272">
    <property type="taxonomic scope" value="Bacteria"/>
</dbReference>
<dbReference type="HOGENOM" id="CLU_489786_0_0_6"/>
<dbReference type="OrthoDB" id="9759736at2"/>
<dbReference type="GO" id="GO:0003911">
    <property type="term" value="F:DNA ligase (NAD+) activity"/>
    <property type="evidence" value="ECO:0007669"/>
    <property type="project" value="UniProtKB-UniRule"/>
</dbReference>
<dbReference type="GO" id="GO:0006281">
    <property type="term" value="P:DNA repair"/>
    <property type="evidence" value="ECO:0007669"/>
    <property type="project" value="UniProtKB-KW"/>
</dbReference>
<dbReference type="GO" id="GO:0006260">
    <property type="term" value="P:DNA replication"/>
    <property type="evidence" value="ECO:0007669"/>
    <property type="project" value="UniProtKB-KW"/>
</dbReference>
<dbReference type="Gene3D" id="1.10.150.20">
    <property type="entry name" value="5' to 3' exonuclease, C-terminal subdomain"/>
    <property type="match status" value="2"/>
</dbReference>
<dbReference type="Gene3D" id="3.30.470.30">
    <property type="entry name" value="DNA ligase/mRNA capping enzyme"/>
    <property type="match status" value="1"/>
</dbReference>
<dbReference type="Gene3D" id="1.10.287.610">
    <property type="entry name" value="Helix hairpin bin"/>
    <property type="match status" value="1"/>
</dbReference>
<dbReference type="Gene3D" id="2.40.50.140">
    <property type="entry name" value="Nucleic acid-binding proteins"/>
    <property type="match status" value="1"/>
</dbReference>
<dbReference type="HAMAP" id="MF_01587">
    <property type="entry name" value="DNA_ligase_B"/>
    <property type="match status" value="1"/>
</dbReference>
<dbReference type="InterPro" id="IPR001679">
    <property type="entry name" value="DNA_ligase"/>
</dbReference>
<dbReference type="InterPro" id="IPR020923">
    <property type="entry name" value="DNA_ligase_B"/>
</dbReference>
<dbReference type="InterPro" id="IPR013839">
    <property type="entry name" value="DNAligase_adenylation"/>
</dbReference>
<dbReference type="InterPro" id="IPR013840">
    <property type="entry name" value="DNAligase_N"/>
</dbReference>
<dbReference type="InterPro" id="IPR012340">
    <property type="entry name" value="NA-bd_OB-fold"/>
</dbReference>
<dbReference type="InterPro" id="IPR050326">
    <property type="entry name" value="NAD_dep_DNA_ligaseB"/>
</dbReference>
<dbReference type="InterPro" id="IPR004150">
    <property type="entry name" value="NAD_DNA_ligase_OB"/>
</dbReference>
<dbReference type="InterPro" id="IPR010994">
    <property type="entry name" value="RuvA_2-like"/>
</dbReference>
<dbReference type="NCBIfam" id="NF005987">
    <property type="entry name" value="PRK08097.1"/>
    <property type="match status" value="1"/>
</dbReference>
<dbReference type="PANTHER" id="PTHR47810">
    <property type="entry name" value="DNA LIGASE"/>
    <property type="match status" value="1"/>
</dbReference>
<dbReference type="PANTHER" id="PTHR47810:SF1">
    <property type="entry name" value="DNA LIGASE B"/>
    <property type="match status" value="1"/>
</dbReference>
<dbReference type="Pfam" id="PF01653">
    <property type="entry name" value="DNA_ligase_aden"/>
    <property type="match status" value="1"/>
</dbReference>
<dbReference type="Pfam" id="PF03120">
    <property type="entry name" value="DNA_ligase_OB"/>
    <property type="match status" value="1"/>
</dbReference>
<dbReference type="PIRSF" id="PIRSF001604">
    <property type="entry name" value="LigA"/>
    <property type="match status" value="1"/>
</dbReference>
<dbReference type="SMART" id="SM00532">
    <property type="entry name" value="LIGANc"/>
    <property type="match status" value="1"/>
</dbReference>
<dbReference type="SUPFAM" id="SSF56091">
    <property type="entry name" value="DNA ligase/mRNA capping enzyme, catalytic domain"/>
    <property type="match status" value="1"/>
</dbReference>
<dbReference type="SUPFAM" id="SSF50249">
    <property type="entry name" value="Nucleic acid-binding proteins"/>
    <property type="match status" value="1"/>
</dbReference>
<dbReference type="SUPFAM" id="SSF47781">
    <property type="entry name" value="RuvA domain 2-like"/>
    <property type="match status" value="1"/>
</dbReference>
<comment type="function">
    <text evidence="1">Catalyzes the formation of phosphodiester linkages between 5'-phosphoryl and 3'-hydroxyl groups in double-stranded DNA using NAD as a coenzyme and as the energy source for the reaction.</text>
</comment>
<comment type="catalytic activity">
    <reaction evidence="1">
        <text>NAD(+) + (deoxyribonucleotide)n-3'-hydroxyl + 5'-phospho-(deoxyribonucleotide)m = (deoxyribonucleotide)n+m + AMP + beta-nicotinamide D-nucleotide.</text>
        <dbReference type="EC" id="6.5.1.2"/>
    </reaction>
</comment>
<comment type="similarity">
    <text evidence="1">Belongs to the NAD-dependent DNA ligase family. LigB subfamily.</text>
</comment>
<gene>
    <name evidence="1" type="primary">ligB</name>
    <name type="ordered locus">PFLU_5711</name>
</gene>
<proteinExistence type="inferred from homology"/>
<name>LIGB_PSEFS</name>
<organism>
    <name type="scientific">Pseudomonas fluorescens (strain SBW25)</name>
    <dbReference type="NCBI Taxonomy" id="216595"/>
    <lineage>
        <taxon>Bacteria</taxon>
        <taxon>Pseudomonadati</taxon>
        <taxon>Pseudomonadota</taxon>
        <taxon>Gammaproteobacteria</taxon>
        <taxon>Pseudomonadales</taxon>
        <taxon>Pseudomonadaceae</taxon>
        <taxon>Pseudomonas</taxon>
    </lineage>
</organism>
<evidence type="ECO:0000255" key="1">
    <source>
        <dbReference type="HAMAP-Rule" id="MF_01587"/>
    </source>
</evidence>
<keyword id="KW-0227">DNA damage</keyword>
<keyword id="KW-0234">DNA repair</keyword>
<keyword id="KW-0235">DNA replication</keyword>
<keyword id="KW-0436">Ligase</keyword>
<keyword id="KW-0520">NAD</keyword>
<reference key="1">
    <citation type="journal article" date="2009" name="Genome Biol.">
        <title>Genomic and genetic analyses of diversity and plant interactions of Pseudomonas fluorescens.</title>
        <authorList>
            <person name="Silby M.W."/>
            <person name="Cerdeno-Tarraga A.M."/>
            <person name="Vernikos G.S."/>
            <person name="Giddens S.R."/>
            <person name="Jackson R.W."/>
            <person name="Preston G.M."/>
            <person name="Zhang X.-X."/>
            <person name="Moon C.D."/>
            <person name="Gehrig S.M."/>
            <person name="Godfrey S.A.C."/>
            <person name="Knight C.G."/>
            <person name="Malone J.G."/>
            <person name="Robinson Z."/>
            <person name="Spiers A.J."/>
            <person name="Harris S."/>
            <person name="Challis G.L."/>
            <person name="Yaxley A.M."/>
            <person name="Harris D."/>
            <person name="Seeger K."/>
            <person name="Murphy L."/>
            <person name="Rutter S."/>
            <person name="Squares R."/>
            <person name="Quail M.A."/>
            <person name="Saunders E."/>
            <person name="Mavromatis K."/>
            <person name="Brettin T.S."/>
            <person name="Bentley S.D."/>
            <person name="Hothersall J."/>
            <person name="Stephens E."/>
            <person name="Thomas C.M."/>
            <person name="Parkhill J."/>
            <person name="Levy S.B."/>
            <person name="Rainey P.B."/>
            <person name="Thomson N.R."/>
        </authorList>
    </citation>
    <scope>NUCLEOTIDE SEQUENCE [LARGE SCALE GENOMIC DNA]</scope>
    <source>
        <strain>SBW25</strain>
    </source>
</reference>